<feature type="chain" id="PRO_0000065884" description="Internal scaffolding protein VP3">
    <location>
        <begin position="1"/>
        <end position="145"/>
    </location>
</feature>
<organism>
    <name type="scientific">Chlamydia phage 1</name>
    <name type="common">Bacteriophage Chp1</name>
    <dbReference type="NCBI Taxonomy" id="2003327"/>
    <lineage>
        <taxon>Viruses</taxon>
        <taxon>Monodnaviria</taxon>
        <taxon>Sangervirae</taxon>
        <taxon>Phixviricota</taxon>
        <taxon>Malgrandaviricetes</taxon>
        <taxon>Petitvirales</taxon>
        <taxon>Microviridae</taxon>
        <taxon>Gokushovirinae</taxon>
        <taxon>Chlamydiamicrovirus</taxon>
    </lineage>
</organism>
<protein>
    <recommendedName>
        <fullName>Internal scaffolding protein VP3</fullName>
    </recommendedName>
    <alternativeName>
        <fullName>Protein VP3</fullName>
        <shortName>VP3</shortName>
    </alternativeName>
</protein>
<organismHost>
    <name type="scientific">Chlamydia psittaci</name>
    <name type="common">Chlamydophila psittaci</name>
    <dbReference type="NCBI Taxonomy" id="83554"/>
</organismHost>
<proteinExistence type="evidence at protein level"/>
<reference key="1">
    <citation type="journal article" date="1989" name="J. Gen. Virol.">
        <title>Analysis of the complete nucleotide sequence of Chp1, a phage which infects avian Chlamydia psittaci.</title>
        <authorList>
            <person name="Storey C.C."/>
            <person name="Lusher M."/>
            <person name="Richmond S.J."/>
        </authorList>
    </citation>
    <scope>NUCLEOTIDE SEQUENCE [GENOMIC DNA]</scope>
    <scope>PARTIAL PROTEIN SEQUENCE</scope>
</reference>
<sequence length="145" mass="16681">MKFRTIYDEERPAPVLECKDESLCLAYQCTETSIEKLVKLANQNPSYLHAFAGDPTRQPEYGECPSPLDYQDALEIVARGEEAFYSLPANIRVNFSNPMEFLSWLEDPANYDEVEKLGLLDPEKVQIRKSKLQKDQKEEVSSEEK</sequence>
<keyword id="KW-0903">Direct protein sequencing</keyword>
<keyword id="KW-1035">Host cytoplasm</keyword>
<keyword id="KW-1185">Reference proteome</keyword>
<keyword id="KW-0118">Viral capsid assembly</keyword>
<keyword id="KW-1188">Viral release from host cell</keyword>
<comment type="function">
    <text evidence="1">Participates in the assembly of the viral procapsid in the cytoplasm. Released from the procapsid upon genome packaging, possibly through affinity displacement by the protein ORF8, or by proteolysis (By similarity).</text>
</comment>
<comment type="subcellular location">
    <subcellularLocation>
        <location evidence="1">Host cytoplasm</location>
    </subcellularLocation>
</comment>
<comment type="similarity">
    <text evidence="2">Belongs to the microviridae B protein family.</text>
</comment>
<dbReference type="EMBL" id="D00624">
    <property type="protein sequence ID" value="BAA00509.1"/>
    <property type="molecule type" value="Genomic_DNA"/>
</dbReference>
<dbReference type="KEGG" id="vg:1261213"/>
<dbReference type="Proteomes" id="UP000002125">
    <property type="component" value="Genome"/>
</dbReference>
<dbReference type="GO" id="GO:0030430">
    <property type="term" value="C:host cell cytoplasm"/>
    <property type="evidence" value="ECO:0007669"/>
    <property type="project" value="UniProtKB-SubCell"/>
</dbReference>
<dbReference type="InterPro" id="IPR014131">
    <property type="entry name" value="Chlamydia_phage_Vp3"/>
</dbReference>
<dbReference type="NCBIfam" id="TIGR02763">
    <property type="entry name" value="chlamy_scaf"/>
    <property type="match status" value="1"/>
</dbReference>
<dbReference type="Pfam" id="PF09675">
    <property type="entry name" value="Chlamy_scaf"/>
    <property type="match status" value="1"/>
</dbReference>
<gene>
    <name type="ORF">ORF3</name>
</gene>
<accession>P19194</accession>
<evidence type="ECO:0000250" key="1"/>
<evidence type="ECO:0000305" key="2"/>
<name>B_BPCHP</name>